<proteinExistence type="inferred from homology"/>
<evidence type="ECO:0000255" key="1">
    <source>
        <dbReference type="HAMAP-Rule" id="MF_01694"/>
    </source>
</evidence>
<evidence type="ECO:0000255" key="2">
    <source>
        <dbReference type="PROSITE-ProRule" id="PRU01266"/>
    </source>
</evidence>
<evidence type="ECO:0000305" key="3"/>
<reference key="1">
    <citation type="submission" date="2005-11" db="EMBL/GenBank/DDBJ databases">
        <title>The complete genome sequence of Lawsonia intracellularis: the causative agent of proliferative enteropathy.</title>
        <authorList>
            <person name="Kaur K."/>
            <person name="Zhang Q."/>
            <person name="Beckler D."/>
            <person name="Munir S."/>
            <person name="Li L."/>
            <person name="Kinsley K."/>
            <person name="Herron L."/>
            <person name="Peterson A."/>
            <person name="May B."/>
            <person name="Singh S."/>
            <person name="Gebhart C."/>
            <person name="Kapur V."/>
        </authorList>
    </citation>
    <scope>NUCLEOTIDE SEQUENCE [LARGE SCALE GENOMIC DNA]</scope>
    <source>
        <strain>PHE/MN1-00</strain>
    </source>
</reference>
<gene>
    <name evidence="1" type="primary">bioB</name>
    <name type="ordered locus">LI0420</name>
</gene>
<sequence>MRNDWTFKEAKQIFNLPLLELLYKAQTIHRKYFDPNKIQISMLLNIKTGNCPENCGYCSQSSHYKTDLQKEPLVDIDTLISEAKKAKELGSTRFCMGAAWRSPLDKDLKIVCQMIEEVKKLGLETCVTLGFLKEHQIAMLKKAGLDFYNHNMNTSPEFYEHIATTHTFDDRLATLKAVRKFGIKLCSGGIIGLGETIDDRISMLLLLATLEEQPESVPINRFVKVAGTPLNPQSDIDPFDFVRIIALTRILMPKSYIRLAAGREQMSDELQTLCFMGGANSIFYGGRLLTTDGPQPEQDDLLFQKIGLEKVQTICH</sequence>
<accession>Q1MRA1</accession>
<dbReference type="EC" id="2.8.1.6" evidence="1"/>
<dbReference type="EMBL" id="AM180252">
    <property type="protein sequence ID" value="CAJ54475.1"/>
    <property type="status" value="ALT_INIT"/>
    <property type="molecule type" value="Genomic_DNA"/>
</dbReference>
<dbReference type="RefSeq" id="WP_015353734.1">
    <property type="nucleotide sequence ID" value="NC_008011.1"/>
</dbReference>
<dbReference type="SMR" id="Q1MRA1"/>
<dbReference type="STRING" id="363253.LI0420"/>
<dbReference type="KEGG" id="lip:LI0420"/>
<dbReference type="eggNOG" id="COG0502">
    <property type="taxonomic scope" value="Bacteria"/>
</dbReference>
<dbReference type="HOGENOM" id="CLU_033172_1_2_7"/>
<dbReference type="OrthoDB" id="9786826at2"/>
<dbReference type="UniPathway" id="UPA00078">
    <property type="reaction ID" value="UER00162"/>
</dbReference>
<dbReference type="Proteomes" id="UP000002430">
    <property type="component" value="Chromosome"/>
</dbReference>
<dbReference type="GO" id="GO:0051537">
    <property type="term" value="F:2 iron, 2 sulfur cluster binding"/>
    <property type="evidence" value="ECO:0007669"/>
    <property type="project" value="UniProtKB-KW"/>
</dbReference>
<dbReference type="GO" id="GO:0051539">
    <property type="term" value="F:4 iron, 4 sulfur cluster binding"/>
    <property type="evidence" value="ECO:0007669"/>
    <property type="project" value="UniProtKB-KW"/>
</dbReference>
<dbReference type="GO" id="GO:0004076">
    <property type="term" value="F:biotin synthase activity"/>
    <property type="evidence" value="ECO:0007669"/>
    <property type="project" value="UniProtKB-UniRule"/>
</dbReference>
<dbReference type="GO" id="GO:0005506">
    <property type="term" value="F:iron ion binding"/>
    <property type="evidence" value="ECO:0007669"/>
    <property type="project" value="UniProtKB-UniRule"/>
</dbReference>
<dbReference type="GO" id="GO:0009102">
    <property type="term" value="P:biotin biosynthetic process"/>
    <property type="evidence" value="ECO:0007669"/>
    <property type="project" value="UniProtKB-UniRule"/>
</dbReference>
<dbReference type="CDD" id="cd01335">
    <property type="entry name" value="Radical_SAM"/>
    <property type="match status" value="1"/>
</dbReference>
<dbReference type="Gene3D" id="3.20.20.70">
    <property type="entry name" value="Aldolase class I"/>
    <property type="match status" value="1"/>
</dbReference>
<dbReference type="HAMAP" id="MF_01694">
    <property type="entry name" value="BioB"/>
    <property type="match status" value="1"/>
</dbReference>
<dbReference type="InterPro" id="IPR013785">
    <property type="entry name" value="Aldolase_TIM"/>
</dbReference>
<dbReference type="InterPro" id="IPR010722">
    <property type="entry name" value="BATS_dom"/>
</dbReference>
<dbReference type="InterPro" id="IPR002684">
    <property type="entry name" value="Biotin_synth/BioAB"/>
</dbReference>
<dbReference type="InterPro" id="IPR024177">
    <property type="entry name" value="Biotin_synthase"/>
</dbReference>
<dbReference type="InterPro" id="IPR006638">
    <property type="entry name" value="Elp3/MiaA/NifB-like_rSAM"/>
</dbReference>
<dbReference type="InterPro" id="IPR007197">
    <property type="entry name" value="rSAM"/>
</dbReference>
<dbReference type="NCBIfam" id="TIGR00433">
    <property type="entry name" value="bioB"/>
    <property type="match status" value="1"/>
</dbReference>
<dbReference type="PANTHER" id="PTHR22976">
    <property type="entry name" value="BIOTIN SYNTHASE"/>
    <property type="match status" value="1"/>
</dbReference>
<dbReference type="PANTHER" id="PTHR22976:SF2">
    <property type="entry name" value="BIOTIN SYNTHASE, MITOCHONDRIAL"/>
    <property type="match status" value="1"/>
</dbReference>
<dbReference type="Pfam" id="PF06968">
    <property type="entry name" value="BATS"/>
    <property type="match status" value="1"/>
</dbReference>
<dbReference type="Pfam" id="PF04055">
    <property type="entry name" value="Radical_SAM"/>
    <property type="match status" value="1"/>
</dbReference>
<dbReference type="PIRSF" id="PIRSF001619">
    <property type="entry name" value="Biotin_synth"/>
    <property type="match status" value="1"/>
</dbReference>
<dbReference type="SFLD" id="SFLDF00272">
    <property type="entry name" value="biotin_synthase"/>
    <property type="match status" value="1"/>
</dbReference>
<dbReference type="SFLD" id="SFLDS00029">
    <property type="entry name" value="Radical_SAM"/>
    <property type="match status" value="1"/>
</dbReference>
<dbReference type="SMART" id="SM00876">
    <property type="entry name" value="BATS"/>
    <property type="match status" value="1"/>
</dbReference>
<dbReference type="SMART" id="SM00729">
    <property type="entry name" value="Elp3"/>
    <property type="match status" value="1"/>
</dbReference>
<dbReference type="SUPFAM" id="SSF102114">
    <property type="entry name" value="Radical SAM enzymes"/>
    <property type="match status" value="1"/>
</dbReference>
<dbReference type="PROSITE" id="PS51918">
    <property type="entry name" value="RADICAL_SAM"/>
    <property type="match status" value="1"/>
</dbReference>
<keyword id="KW-0001">2Fe-2S</keyword>
<keyword id="KW-0004">4Fe-4S</keyword>
<keyword id="KW-0093">Biotin biosynthesis</keyword>
<keyword id="KW-0408">Iron</keyword>
<keyword id="KW-0411">Iron-sulfur</keyword>
<keyword id="KW-0479">Metal-binding</keyword>
<keyword id="KW-1185">Reference proteome</keyword>
<keyword id="KW-0949">S-adenosyl-L-methionine</keyword>
<keyword id="KW-0808">Transferase</keyword>
<organism>
    <name type="scientific">Lawsonia intracellularis (strain PHE/MN1-00)</name>
    <dbReference type="NCBI Taxonomy" id="363253"/>
    <lineage>
        <taxon>Bacteria</taxon>
        <taxon>Pseudomonadati</taxon>
        <taxon>Thermodesulfobacteriota</taxon>
        <taxon>Desulfovibrionia</taxon>
        <taxon>Desulfovibrionales</taxon>
        <taxon>Desulfovibrionaceae</taxon>
        <taxon>Lawsonia</taxon>
    </lineage>
</organism>
<comment type="function">
    <text evidence="1">Catalyzes the conversion of dethiobiotin (DTB) to biotin by the insertion of a sulfur atom into dethiobiotin via a radical-based mechanism.</text>
</comment>
<comment type="catalytic activity">
    <reaction evidence="1">
        <text>(4R,5S)-dethiobiotin + (sulfur carrier)-SH + 2 reduced [2Fe-2S]-[ferredoxin] + 2 S-adenosyl-L-methionine = (sulfur carrier)-H + biotin + 2 5'-deoxyadenosine + 2 L-methionine + 2 oxidized [2Fe-2S]-[ferredoxin]</text>
        <dbReference type="Rhea" id="RHEA:22060"/>
        <dbReference type="Rhea" id="RHEA-COMP:10000"/>
        <dbReference type="Rhea" id="RHEA-COMP:10001"/>
        <dbReference type="Rhea" id="RHEA-COMP:14737"/>
        <dbReference type="Rhea" id="RHEA-COMP:14739"/>
        <dbReference type="ChEBI" id="CHEBI:17319"/>
        <dbReference type="ChEBI" id="CHEBI:29917"/>
        <dbReference type="ChEBI" id="CHEBI:33737"/>
        <dbReference type="ChEBI" id="CHEBI:33738"/>
        <dbReference type="ChEBI" id="CHEBI:57586"/>
        <dbReference type="ChEBI" id="CHEBI:57844"/>
        <dbReference type="ChEBI" id="CHEBI:59789"/>
        <dbReference type="ChEBI" id="CHEBI:64428"/>
        <dbReference type="ChEBI" id="CHEBI:149473"/>
        <dbReference type="EC" id="2.8.1.6"/>
    </reaction>
</comment>
<comment type="cofactor">
    <cofactor evidence="1">
        <name>[4Fe-4S] cluster</name>
        <dbReference type="ChEBI" id="CHEBI:49883"/>
    </cofactor>
    <text evidence="1">Binds 1 [4Fe-4S] cluster. The cluster is coordinated with 3 cysteines and an exchangeable S-adenosyl-L-methionine.</text>
</comment>
<comment type="cofactor">
    <cofactor evidence="1">
        <name>[2Fe-2S] cluster</name>
        <dbReference type="ChEBI" id="CHEBI:190135"/>
    </cofactor>
    <text evidence="1">Binds 1 [2Fe-2S] cluster. The cluster is coordinated with 3 cysteines and 1 arginine.</text>
</comment>
<comment type="pathway">
    <text evidence="1">Cofactor biosynthesis; biotin biosynthesis; biotin from 7,8-diaminononanoate: step 2/2.</text>
</comment>
<comment type="subunit">
    <text evidence="1">Homodimer.</text>
</comment>
<comment type="similarity">
    <text evidence="1">Belongs to the radical SAM superfamily. Biotin synthase family.</text>
</comment>
<comment type="sequence caution" evidence="3">
    <conflict type="erroneous initiation">
        <sequence resource="EMBL-CDS" id="CAJ54475"/>
    </conflict>
</comment>
<feature type="chain" id="PRO_0000381437" description="Biotin synthase">
    <location>
        <begin position="1"/>
        <end position="316"/>
    </location>
</feature>
<feature type="domain" description="Radical SAM core" evidence="2">
    <location>
        <begin position="36"/>
        <end position="260"/>
    </location>
</feature>
<feature type="binding site" evidence="1">
    <location>
        <position position="51"/>
    </location>
    <ligand>
        <name>[4Fe-4S] cluster</name>
        <dbReference type="ChEBI" id="CHEBI:49883"/>
        <note>4Fe-4S-S-AdoMet</note>
    </ligand>
</feature>
<feature type="binding site" evidence="1">
    <location>
        <position position="55"/>
    </location>
    <ligand>
        <name>[4Fe-4S] cluster</name>
        <dbReference type="ChEBI" id="CHEBI:49883"/>
        <note>4Fe-4S-S-AdoMet</note>
    </ligand>
</feature>
<feature type="binding site" evidence="1">
    <location>
        <position position="58"/>
    </location>
    <ligand>
        <name>[4Fe-4S] cluster</name>
        <dbReference type="ChEBI" id="CHEBI:49883"/>
        <note>4Fe-4S-S-AdoMet</note>
    </ligand>
</feature>
<feature type="binding site" evidence="1">
    <location>
        <position position="95"/>
    </location>
    <ligand>
        <name>[2Fe-2S] cluster</name>
        <dbReference type="ChEBI" id="CHEBI:190135"/>
    </ligand>
</feature>
<feature type="binding site" evidence="1">
    <location>
        <position position="126"/>
    </location>
    <ligand>
        <name>[2Fe-2S] cluster</name>
        <dbReference type="ChEBI" id="CHEBI:190135"/>
    </ligand>
</feature>
<feature type="binding site" evidence="1">
    <location>
        <position position="186"/>
    </location>
    <ligand>
        <name>[2Fe-2S] cluster</name>
        <dbReference type="ChEBI" id="CHEBI:190135"/>
    </ligand>
</feature>
<feature type="binding site" evidence="1">
    <location>
        <position position="258"/>
    </location>
    <ligand>
        <name>[2Fe-2S] cluster</name>
        <dbReference type="ChEBI" id="CHEBI:190135"/>
    </ligand>
</feature>
<protein>
    <recommendedName>
        <fullName evidence="1">Biotin synthase</fullName>
        <ecNumber evidence="1">2.8.1.6</ecNumber>
    </recommendedName>
</protein>
<name>BIOB_LAWIP</name>